<name>FTSB_XANCB</name>
<comment type="function">
    <text evidence="1">Essential cell division protein. May link together the upstream cell division proteins, which are predominantly cytoplasmic, with the downstream cell division proteins, which are predominantly periplasmic.</text>
</comment>
<comment type="subunit">
    <text evidence="1">Part of a complex composed of FtsB, FtsL and FtsQ.</text>
</comment>
<comment type="subcellular location">
    <subcellularLocation>
        <location evidence="1">Cell inner membrane</location>
        <topology evidence="1">Single-pass type II membrane protein</topology>
    </subcellularLocation>
    <text evidence="1">Localizes to the division septum.</text>
</comment>
<comment type="similarity">
    <text evidence="1">Belongs to the FtsB family.</text>
</comment>
<gene>
    <name evidence="1" type="primary">ftsB</name>
    <name type="ordered locus">xcc-b100_2558</name>
</gene>
<accession>B0RU04</accession>
<organism>
    <name type="scientific">Xanthomonas campestris pv. campestris (strain B100)</name>
    <dbReference type="NCBI Taxonomy" id="509169"/>
    <lineage>
        <taxon>Bacteria</taxon>
        <taxon>Pseudomonadati</taxon>
        <taxon>Pseudomonadota</taxon>
        <taxon>Gammaproteobacteria</taxon>
        <taxon>Lysobacterales</taxon>
        <taxon>Lysobacteraceae</taxon>
        <taxon>Xanthomonas</taxon>
    </lineage>
</organism>
<sequence length="121" mass="13469">MRNWRWLLLVLAVLLAWLQYRFWFGPGNSGEVMMLEAQVAHQTRDNEGLRQRNQALAAEVKDLKDGEAAIEERARSELGMIKPGETFYRVVEDAPLLPPAAQEAAPPAQPPAASADPVDHP</sequence>
<protein>
    <recommendedName>
        <fullName evidence="1">Cell division protein FtsB</fullName>
    </recommendedName>
</protein>
<proteinExistence type="inferred from homology"/>
<dbReference type="EMBL" id="AM920689">
    <property type="protein sequence ID" value="CAP51918.1"/>
    <property type="molecule type" value="Genomic_DNA"/>
</dbReference>
<dbReference type="SMR" id="B0RU04"/>
<dbReference type="KEGG" id="xca:xcc-b100_2558"/>
<dbReference type="HOGENOM" id="CLU_134863_5_0_6"/>
<dbReference type="Proteomes" id="UP000001188">
    <property type="component" value="Chromosome"/>
</dbReference>
<dbReference type="GO" id="GO:0032153">
    <property type="term" value="C:cell division site"/>
    <property type="evidence" value="ECO:0007669"/>
    <property type="project" value="UniProtKB-UniRule"/>
</dbReference>
<dbReference type="GO" id="GO:0030428">
    <property type="term" value="C:cell septum"/>
    <property type="evidence" value="ECO:0007669"/>
    <property type="project" value="TreeGrafter"/>
</dbReference>
<dbReference type="GO" id="GO:0005886">
    <property type="term" value="C:plasma membrane"/>
    <property type="evidence" value="ECO:0007669"/>
    <property type="project" value="UniProtKB-SubCell"/>
</dbReference>
<dbReference type="GO" id="GO:0043093">
    <property type="term" value="P:FtsZ-dependent cytokinesis"/>
    <property type="evidence" value="ECO:0007669"/>
    <property type="project" value="UniProtKB-UniRule"/>
</dbReference>
<dbReference type="HAMAP" id="MF_00599">
    <property type="entry name" value="FtsB"/>
    <property type="match status" value="1"/>
</dbReference>
<dbReference type="InterPro" id="IPR023081">
    <property type="entry name" value="Cell_div_FtsB"/>
</dbReference>
<dbReference type="InterPro" id="IPR007060">
    <property type="entry name" value="FtsL/DivIC"/>
</dbReference>
<dbReference type="NCBIfam" id="NF002058">
    <property type="entry name" value="PRK00888.1"/>
    <property type="match status" value="1"/>
</dbReference>
<dbReference type="PANTHER" id="PTHR37485">
    <property type="entry name" value="CELL DIVISION PROTEIN FTSB"/>
    <property type="match status" value="1"/>
</dbReference>
<dbReference type="PANTHER" id="PTHR37485:SF1">
    <property type="entry name" value="CELL DIVISION PROTEIN FTSB"/>
    <property type="match status" value="1"/>
</dbReference>
<dbReference type="Pfam" id="PF04977">
    <property type="entry name" value="DivIC"/>
    <property type="match status" value="1"/>
</dbReference>
<reference key="1">
    <citation type="journal article" date="2008" name="J. Biotechnol.">
        <title>The genome of Xanthomonas campestris pv. campestris B100 and its use for the reconstruction of metabolic pathways involved in xanthan biosynthesis.</title>
        <authorList>
            <person name="Vorhoelter F.-J."/>
            <person name="Schneiker S."/>
            <person name="Goesmann A."/>
            <person name="Krause L."/>
            <person name="Bekel T."/>
            <person name="Kaiser O."/>
            <person name="Linke B."/>
            <person name="Patschkowski T."/>
            <person name="Rueckert C."/>
            <person name="Schmid J."/>
            <person name="Sidhu V.K."/>
            <person name="Sieber V."/>
            <person name="Tauch A."/>
            <person name="Watt S.A."/>
            <person name="Weisshaar B."/>
            <person name="Becker A."/>
            <person name="Niehaus K."/>
            <person name="Puehler A."/>
        </authorList>
    </citation>
    <scope>NUCLEOTIDE SEQUENCE [LARGE SCALE GENOMIC DNA]</scope>
    <source>
        <strain>B100</strain>
    </source>
</reference>
<feature type="chain" id="PRO_1000129949" description="Cell division protein FtsB">
    <location>
        <begin position="1"/>
        <end position="121"/>
    </location>
</feature>
<feature type="topological domain" description="Cytoplasmic" evidence="1">
    <location>
        <begin position="1"/>
        <end position="6"/>
    </location>
</feature>
<feature type="transmembrane region" description="Helical" evidence="1">
    <location>
        <begin position="7"/>
        <end position="24"/>
    </location>
</feature>
<feature type="topological domain" description="Periplasmic" evidence="1">
    <location>
        <begin position="25"/>
        <end position="121"/>
    </location>
</feature>
<feature type="region of interest" description="Disordered" evidence="2">
    <location>
        <begin position="98"/>
        <end position="121"/>
    </location>
</feature>
<feature type="coiled-coil region" evidence="1">
    <location>
        <begin position="31"/>
        <end position="66"/>
    </location>
</feature>
<keyword id="KW-0131">Cell cycle</keyword>
<keyword id="KW-0132">Cell division</keyword>
<keyword id="KW-0997">Cell inner membrane</keyword>
<keyword id="KW-1003">Cell membrane</keyword>
<keyword id="KW-0175">Coiled coil</keyword>
<keyword id="KW-0472">Membrane</keyword>
<keyword id="KW-0812">Transmembrane</keyword>
<keyword id="KW-1133">Transmembrane helix</keyword>
<evidence type="ECO:0000255" key="1">
    <source>
        <dbReference type="HAMAP-Rule" id="MF_00599"/>
    </source>
</evidence>
<evidence type="ECO:0000256" key="2">
    <source>
        <dbReference type="SAM" id="MobiDB-lite"/>
    </source>
</evidence>